<name>PSBF_STEPS</name>
<protein>
    <recommendedName>
        <fullName evidence="1">Cytochrome b559 subunit beta</fullName>
    </recommendedName>
    <alternativeName>
        <fullName evidence="1">PSII reaction center subunit VI</fullName>
    </alternativeName>
</protein>
<accession>Q6EYP2</accession>
<organism>
    <name type="scientific">Stewartia pseudocamellia</name>
    <name type="common">Japanese stewartia</name>
    <name type="synonym">Stewartia koreana</name>
    <dbReference type="NCBI Taxonomy" id="59679"/>
    <lineage>
        <taxon>Eukaryota</taxon>
        <taxon>Viridiplantae</taxon>
        <taxon>Streptophyta</taxon>
        <taxon>Embryophyta</taxon>
        <taxon>Tracheophyta</taxon>
        <taxon>Spermatophyta</taxon>
        <taxon>Magnoliopsida</taxon>
        <taxon>eudicotyledons</taxon>
        <taxon>Gunneridae</taxon>
        <taxon>Pentapetalae</taxon>
        <taxon>asterids</taxon>
        <taxon>Ericales</taxon>
        <taxon>Theaceae</taxon>
        <taxon>Stewartia</taxon>
    </lineage>
</organism>
<gene>
    <name evidence="1" type="primary">psbF</name>
</gene>
<reference key="1">
    <citation type="submission" date="2002-07" db="EMBL/GenBank/DDBJ databases">
        <title>Parsing out signal and noise for seed-plant phylogenetic inference.</title>
        <authorList>
            <person name="Graham S.W."/>
            <person name="Rai H.S."/>
            <person name="Ikegami K."/>
            <person name="Reeves P.A."/>
            <person name="Olmstead R.G."/>
        </authorList>
    </citation>
    <scope>NUCLEOTIDE SEQUENCE [GENOMIC DNA]</scope>
</reference>
<proteinExistence type="inferred from homology"/>
<evidence type="ECO:0000255" key="1">
    <source>
        <dbReference type="HAMAP-Rule" id="MF_00643"/>
    </source>
</evidence>
<geneLocation type="chloroplast"/>
<keyword id="KW-0150">Chloroplast</keyword>
<keyword id="KW-0249">Electron transport</keyword>
<keyword id="KW-0349">Heme</keyword>
<keyword id="KW-0408">Iron</keyword>
<keyword id="KW-0472">Membrane</keyword>
<keyword id="KW-0479">Metal-binding</keyword>
<keyword id="KW-0602">Photosynthesis</keyword>
<keyword id="KW-0604">Photosystem II</keyword>
<keyword id="KW-0934">Plastid</keyword>
<keyword id="KW-0793">Thylakoid</keyword>
<keyword id="KW-0812">Transmembrane</keyword>
<keyword id="KW-1133">Transmembrane helix</keyword>
<keyword id="KW-0813">Transport</keyword>
<dbReference type="EMBL" id="AF528886">
    <property type="protein sequence ID" value="AAQ09331.1"/>
    <property type="molecule type" value="Genomic_DNA"/>
</dbReference>
<dbReference type="RefSeq" id="YP_009418636.1">
    <property type="nucleotide sequence ID" value="NC_035697.1"/>
</dbReference>
<dbReference type="SMR" id="Q6EYP2"/>
<dbReference type="GeneID" id="33907913"/>
<dbReference type="GO" id="GO:0009535">
    <property type="term" value="C:chloroplast thylakoid membrane"/>
    <property type="evidence" value="ECO:0007669"/>
    <property type="project" value="UniProtKB-SubCell"/>
</dbReference>
<dbReference type="GO" id="GO:0009539">
    <property type="term" value="C:photosystem II reaction center"/>
    <property type="evidence" value="ECO:0007669"/>
    <property type="project" value="InterPro"/>
</dbReference>
<dbReference type="GO" id="GO:0009055">
    <property type="term" value="F:electron transfer activity"/>
    <property type="evidence" value="ECO:0007669"/>
    <property type="project" value="UniProtKB-UniRule"/>
</dbReference>
<dbReference type="GO" id="GO:0020037">
    <property type="term" value="F:heme binding"/>
    <property type="evidence" value="ECO:0007669"/>
    <property type="project" value="InterPro"/>
</dbReference>
<dbReference type="GO" id="GO:0005506">
    <property type="term" value="F:iron ion binding"/>
    <property type="evidence" value="ECO:0007669"/>
    <property type="project" value="UniProtKB-UniRule"/>
</dbReference>
<dbReference type="GO" id="GO:0009767">
    <property type="term" value="P:photosynthetic electron transport chain"/>
    <property type="evidence" value="ECO:0007669"/>
    <property type="project" value="InterPro"/>
</dbReference>
<dbReference type="HAMAP" id="MF_00643">
    <property type="entry name" value="PSII_PsbF"/>
    <property type="match status" value="1"/>
</dbReference>
<dbReference type="InterPro" id="IPR006241">
    <property type="entry name" value="PSII_cyt_b559_bsu"/>
</dbReference>
<dbReference type="InterPro" id="IPR006216">
    <property type="entry name" value="PSII_cyt_b559_CS"/>
</dbReference>
<dbReference type="InterPro" id="IPR013081">
    <property type="entry name" value="PSII_cyt_b559_N"/>
</dbReference>
<dbReference type="NCBIfam" id="TIGR01333">
    <property type="entry name" value="cyt_b559_beta"/>
    <property type="match status" value="1"/>
</dbReference>
<dbReference type="Pfam" id="PF00283">
    <property type="entry name" value="Cytochrom_B559"/>
    <property type="match status" value="1"/>
</dbReference>
<dbReference type="PIRSF" id="PIRSF000037">
    <property type="entry name" value="PsbF"/>
    <property type="match status" value="1"/>
</dbReference>
<dbReference type="SUPFAM" id="SSF161045">
    <property type="entry name" value="Cytochrome b559 subunits"/>
    <property type="match status" value="1"/>
</dbReference>
<dbReference type="PROSITE" id="PS00537">
    <property type="entry name" value="CYTOCHROME_B559"/>
    <property type="match status" value="1"/>
</dbReference>
<sequence length="39" mass="4424">MTIDRTYPIFTVRWLAVHGLAVPTVSFLGSISAMQFIQR</sequence>
<comment type="function">
    <text evidence="1">This b-type cytochrome is tightly associated with the reaction center of photosystem II (PSII). PSII is a light-driven water:plastoquinone oxidoreductase that uses light energy to abstract electrons from H(2)O, generating O(2) and a proton gradient subsequently used for ATP formation. It consists of a core antenna complex that captures photons, and an electron transfer chain that converts photonic excitation into a charge separation.</text>
</comment>
<comment type="cofactor">
    <cofactor evidence="1">
        <name>heme b</name>
        <dbReference type="ChEBI" id="CHEBI:60344"/>
    </cofactor>
    <text evidence="1">With its partner (PsbE) binds heme. PSII binds additional chlorophylls, carotenoids and specific lipids.</text>
</comment>
<comment type="subunit">
    <text evidence="1">Heterodimer of an alpha subunit and a beta subunit. PSII is composed of 1 copy each of membrane proteins PsbA, PsbB, PsbC, PsbD, PsbE, PsbF, PsbH, PsbI, PsbJ, PsbK, PsbL, PsbM, PsbT, PsbX, PsbY, PsbZ, Psb30/Ycf12, at least 3 peripheral proteins of the oxygen-evolving complex and a large number of cofactors. It forms dimeric complexes.</text>
</comment>
<comment type="subcellular location">
    <subcellularLocation>
        <location evidence="1">Plastid</location>
        <location evidence="1">Chloroplast thylakoid membrane</location>
        <topology evidence="1">Single-pass membrane protein</topology>
    </subcellularLocation>
</comment>
<comment type="similarity">
    <text evidence="1">Belongs to the PsbE/PsbF family.</text>
</comment>
<feature type="chain" id="PRO_0000200457" description="Cytochrome b559 subunit beta">
    <location>
        <begin position="1"/>
        <end position="39"/>
    </location>
</feature>
<feature type="transmembrane region" description="Helical" evidence="1">
    <location>
        <begin position="14"/>
        <end position="30"/>
    </location>
</feature>
<feature type="binding site" description="axial binding residue" evidence="1">
    <location>
        <position position="18"/>
    </location>
    <ligand>
        <name>heme</name>
        <dbReference type="ChEBI" id="CHEBI:30413"/>
        <note>ligand shared with alpha subunit</note>
    </ligand>
    <ligandPart>
        <name>Fe</name>
        <dbReference type="ChEBI" id="CHEBI:18248"/>
    </ligandPart>
</feature>